<name>PAD1_YEAST</name>
<comment type="function">
    <text evidence="1 2 3 4 9 10 11 12 14 15 17">Flavin prenyltransferase that catalyzes the synthesis of the prenylated FMN cofactor (prenyl-FMN) for the ferulic acid decarboxylase FDC1/ubiD (PubMed:25647642). The prenyltransferase is metal-independent and links a dimethylallyl moiety from dimethylallyl monophosphate (DMAP) to the flavin N5 and C6 atoms of FMN (By similarity). Involved in the decarboxylation of phenylacrylic acids like ferulic acid, p-coumaric acid or cinnamic acid, producing the corresponding vinyl derivatives which play the role of aroma metabolites. Also involved in the degradation of the food preservative sorbic acid (2,4-hexadienoic acid) to a volatile hydrocarbon, 1,3-pentadiene. Not essential for ubiquinone synthesis (PubMed:17889824, PubMed:20471595). Can rescue Q biosynthesis in E.coli strains lacking UbiX (PubMed:17889824). Has mRNA binding activity (PubMed:20844764).</text>
</comment>
<comment type="catalytic activity">
    <reaction evidence="2">
        <text>dimethylallyl phosphate + FMNH2 = prenylated FMNH2 + phosphate</text>
        <dbReference type="Rhea" id="RHEA:37743"/>
        <dbReference type="ChEBI" id="CHEBI:43474"/>
        <dbReference type="ChEBI" id="CHEBI:57618"/>
        <dbReference type="ChEBI" id="CHEBI:87467"/>
        <dbReference type="ChEBI" id="CHEBI:88052"/>
        <dbReference type="EC" id="2.5.1.129"/>
    </reaction>
</comment>
<comment type="subunit">
    <text evidence="2 15">Oligomer.</text>
</comment>
<comment type="subcellular location">
    <subcellularLocation>
        <location evidence="2 5 8">Mitochondrion</location>
    </subcellularLocation>
</comment>
<comment type="mass spectrometry">
    <text>The measured mass is of the truncated protein without mitochondrial targeting sequence including the mass of an N-terminal hexahistidine tag, expressed in E.coli.</text>
</comment>
<comment type="biotechnology">
    <text evidence="4 7 13">The activity of wine yeasts to decarboxylate phenylacrylic acids is one of their biological properties related to the production of phenolic off-flavors (POF) in winemaking.</text>
</comment>
<comment type="miscellaneous">
    <text evidence="6">Present with 1750 molecules/cell in log phase SD medium.</text>
</comment>
<comment type="similarity">
    <text evidence="2 20">Belongs to the UbiX/PAD1 family.</text>
</comment>
<comment type="caution">
    <text evidence="3 4 9 16 21">Was initially thought to be a phenylacrylic acid decarboxylase (PubMed:11693915, PubMed:17766451). However, direct assays could not confirm decarboxylase activity (PubMed:12903944, PubMed:25852989). It has been shown that this enzyme synthesizes the essential cofactor for the associated decarboxylase FDC1. It is therefore thought that decarboxylation defects due to the disruption of this gene were in fact a secondary effect of inactive FDC1 decarboxylase missing its essential cofactor (PubMed:25647642).</text>
</comment>
<keyword id="KW-0285">Flavoprotein</keyword>
<keyword id="KW-0288">FMN</keyword>
<keyword id="KW-0496">Mitochondrion</keyword>
<keyword id="KW-0637">Prenyltransferase</keyword>
<keyword id="KW-1185">Reference proteome</keyword>
<keyword id="KW-0694">RNA-binding</keyword>
<keyword id="KW-0808">Transferase</keyword>
<keyword id="KW-0809">Transit peptide</keyword>
<evidence type="ECO:0000250" key="1">
    <source>
        <dbReference type="UniProtKB" id="Q9HX08"/>
    </source>
</evidence>
<evidence type="ECO:0000255" key="2">
    <source>
        <dbReference type="HAMAP-Rule" id="MF_03197"/>
    </source>
</evidence>
<evidence type="ECO:0000269" key="3">
    <source>
    </source>
</evidence>
<evidence type="ECO:0000269" key="4">
    <source>
    </source>
</evidence>
<evidence type="ECO:0000269" key="5">
    <source>
    </source>
</evidence>
<evidence type="ECO:0000269" key="6">
    <source>
    </source>
</evidence>
<evidence type="ECO:0000269" key="7">
    <source>
    </source>
</evidence>
<evidence type="ECO:0000269" key="8">
    <source>
    </source>
</evidence>
<evidence type="ECO:0000269" key="9">
    <source>
    </source>
</evidence>
<evidence type="ECO:0000269" key="10">
    <source>
    </source>
</evidence>
<evidence type="ECO:0000269" key="11">
    <source>
    </source>
</evidence>
<evidence type="ECO:0000269" key="12">
    <source>
    </source>
</evidence>
<evidence type="ECO:0000269" key="13">
    <source>
    </source>
</evidence>
<evidence type="ECO:0000269" key="14">
    <source>
    </source>
</evidence>
<evidence type="ECO:0000269" key="15">
    <source>
    </source>
</evidence>
<evidence type="ECO:0000269" key="16">
    <source>
    </source>
</evidence>
<evidence type="ECO:0000269" key="17">
    <source>
    </source>
</evidence>
<evidence type="ECO:0000303" key="18">
    <source>
    </source>
</evidence>
<evidence type="ECO:0000303" key="19">
    <source>
    </source>
</evidence>
<evidence type="ECO:0000305" key="20"/>
<evidence type="ECO:0000305" key="21">
    <source>
    </source>
</evidence>
<evidence type="ECO:0000312" key="22">
    <source>
        <dbReference type="SGD" id="S000002946"/>
    </source>
</evidence>
<accession>P33751</accession>
<accession>D6VTF7</accession>
<gene>
    <name evidence="2 19" type="primary">PAD1</name>
    <name evidence="18" type="synonym">POF1</name>
    <name evidence="22" type="ordered locus">YDR538W</name>
</gene>
<reference key="1">
    <citation type="journal article" date="1994" name="Gene">
        <title>PAD1 encodes phenylacrylic acid decarboxylase which confers resistance to cinnamic acid in Saccharomyces cerevisiae.</title>
        <authorList>
            <person name="Clausen M."/>
            <person name="Lamb C.J."/>
            <person name="Megnet R."/>
            <person name="Doerner P.W."/>
        </authorList>
    </citation>
    <scope>NUCLEOTIDE SEQUENCE [GENOMIC DNA]</scope>
    <scope>FUNCTION</scope>
</reference>
<reference key="2">
    <citation type="journal article" date="1997" name="Nature">
        <title>The nucleotide sequence of Saccharomyces cerevisiae chromosome IV.</title>
        <authorList>
            <person name="Jacq C."/>
            <person name="Alt-Moerbe J."/>
            <person name="Andre B."/>
            <person name="Arnold W."/>
            <person name="Bahr A."/>
            <person name="Ballesta J.P.G."/>
            <person name="Bargues M."/>
            <person name="Baron L."/>
            <person name="Becker A."/>
            <person name="Biteau N."/>
            <person name="Bloecker H."/>
            <person name="Blugeon C."/>
            <person name="Boskovic J."/>
            <person name="Brandt P."/>
            <person name="Brueckner M."/>
            <person name="Buitrago M.J."/>
            <person name="Coster F."/>
            <person name="Delaveau T."/>
            <person name="del Rey F."/>
            <person name="Dujon B."/>
            <person name="Eide L.G."/>
            <person name="Garcia-Cantalejo J.M."/>
            <person name="Goffeau A."/>
            <person name="Gomez-Peris A."/>
            <person name="Granotier C."/>
            <person name="Hanemann V."/>
            <person name="Hankeln T."/>
            <person name="Hoheisel J.D."/>
            <person name="Jaeger W."/>
            <person name="Jimenez A."/>
            <person name="Jonniaux J.-L."/>
            <person name="Kraemer C."/>
            <person name="Kuester H."/>
            <person name="Laamanen P."/>
            <person name="Legros Y."/>
            <person name="Louis E.J."/>
            <person name="Moeller-Rieker S."/>
            <person name="Monnet A."/>
            <person name="Moro M."/>
            <person name="Mueller-Auer S."/>
            <person name="Nussbaumer B."/>
            <person name="Paricio N."/>
            <person name="Paulin L."/>
            <person name="Perea J."/>
            <person name="Perez-Alonso M."/>
            <person name="Perez-Ortin J.E."/>
            <person name="Pohl T.M."/>
            <person name="Prydz H."/>
            <person name="Purnelle B."/>
            <person name="Rasmussen S.W."/>
            <person name="Remacha M.A."/>
            <person name="Revuelta J.L."/>
            <person name="Rieger M."/>
            <person name="Salom D."/>
            <person name="Saluz H.P."/>
            <person name="Saiz J.E."/>
            <person name="Saren A.-M."/>
            <person name="Schaefer M."/>
            <person name="Scharfe M."/>
            <person name="Schmidt E.R."/>
            <person name="Schneider C."/>
            <person name="Scholler P."/>
            <person name="Schwarz S."/>
            <person name="Soler-Mira A."/>
            <person name="Urrestarazu L.A."/>
            <person name="Verhasselt P."/>
            <person name="Vissers S."/>
            <person name="Voet M."/>
            <person name="Volckaert G."/>
            <person name="Wagner G."/>
            <person name="Wambutt R."/>
            <person name="Wedler E."/>
            <person name="Wedler H."/>
            <person name="Woelfl S."/>
            <person name="Harris D.E."/>
            <person name="Bowman S."/>
            <person name="Brown D."/>
            <person name="Churcher C.M."/>
            <person name="Connor R."/>
            <person name="Dedman K."/>
            <person name="Gentles S."/>
            <person name="Hamlin N."/>
            <person name="Hunt S."/>
            <person name="Jones L."/>
            <person name="McDonald S."/>
            <person name="Murphy L.D."/>
            <person name="Niblett D."/>
            <person name="Odell C."/>
            <person name="Oliver K."/>
            <person name="Rajandream M.A."/>
            <person name="Richards C."/>
            <person name="Shore L."/>
            <person name="Walsh S.V."/>
            <person name="Barrell B.G."/>
            <person name="Dietrich F.S."/>
            <person name="Mulligan J.T."/>
            <person name="Allen E."/>
            <person name="Araujo R."/>
            <person name="Aviles E."/>
            <person name="Berno A."/>
            <person name="Carpenter J."/>
            <person name="Chen E."/>
            <person name="Cherry J.M."/>
            <person name="Chung E."/>
            <person name="Duncan M."/>
            <person name="Hunicke-Smith S."/>
            <person name="Hyman R.W."/>
            <person name="Komp C."/>
            <person name="Lashkari D."/>
            <person name="Lew H."/>
            <person name="Lin D."/>
            <person name="Mosedale D."/>
            <person name="Nakahara K."/>
            <person name="Namath A."/>
            <person name="Oefner P."/>
            <person name="Oh C."/>
            <person name="Petel F.X."/>
            <person name="Roberts D."/>
            <person name="Schramm S."/>
            <person name="Schroeder M."/>
            <person name="Shogren T."/>
            <person name="Shroff N."/>
            <person name="Winant A."/>
            <person name="Yelton M.A."/>
            <person name="Botstein D."/>
            <person name="Davis R.W."/>
            <person name="Johnston M."/>
            <person name="Andrews S."/>
            <person name="Brinkman R."/>
            <person name="Cooper J."/>
            <person name="Ding H."/>
            <person name="Du Z."/>
            <person name="Favello A."/>
            <person name="Fulton L."/>
            <person name="Gattung S."/>
            <person name="Greco T."/>
            <person name="Hallsworth K."/>
            <person name="Hawkins J."/>
            <person name="Hillier L.W."/>
            <person name="Jier M."/>
            <person name="Johnson D."/>
            <person name="Johnston L."/>
            <person name="Kirsten J."/>
            <person name="Kucaba T."/>
            <person name="Langston Y."/>
            <person name="Latreille P."/>
            <person name="Le T."/>
            <person name="Mardis E."/>
            <person name="Menezes S."/>
            <person name="Miller N."/>
            <person name="Nhan M."/>
            <person name="Pauley A."/>
            <person name="Peluso D."/>
            <person name="Rifkin L."/>
            <person name="Riles L."/>
            <person name="Taich A."/>
            <person name="Trevaskis E."/>
            <person name="Vignati D."/>
            <person name="Wilcox L."/>
            <person name="Wohldman P."/>
            <person name="Vaudin M."/>
            <person name="Wilson R."/>
            <person name="Waterston R."/>
            <person name="Albermann K."/>
            <person name="Hani J."/>
            <person name="Heumann K."/>
            <person name="Kleine K."/>
            <person name="Mewes H.-W."/>
            <person name="Zollner A."/>
            <person name="Zaccaria P."/>
        </authorList>
    </citation>
    <scope>NUCLEOTIDE SEQUENCE [LARGE SCALE GENOMIC DNA]</scope>
    <source>
        <strain>ATCC 204508 / S288c</strain>
    </source>
</reference>
<reference key="3">
    <citation type="journal article" date="2014" name="G3 (Bethesda)">
        <title>The reference genome sequence of Saccharomyces cerevisiae: Then and now.</title>
        <authorList>
            <person name="Engel S.R."/>
            <person name="Dietrich F.S."/>
            <person name="Fisk D.G."/>
            <person name="Binkley G."/>
            <person name="Balakrishnan R."/>
            <person name="Costanzo M.C."/>
            <person name="Dwight S.S."/>
            <person name="Hitz B.C."/>
            <person name="Karra K."/>
            <person name="Nash R.S."/>
            <person name="Weng S."/>
            <person name="Wong E.D."/>
            <person name="Lloyd P."/>
            <person name="Skrzypek M.S."/>
            <person name="Miyasato S.R."/>
            <person name="Simison M."/>
            <person name="Cherry J.M."/>
        </authorList>
    </citation>
    <scope>GENOME REANNOTATION</scope>
    <source>
        <strain>ATCC 204508 / S288c</strain>
    </source>
</reference>
<reference key="4">
    <citation type="journal article" date="2000" name="J. Biosci. Bioeng.">
        <title>Distribution of phenolic yeasts and production of phenolic off-flavors in wine fermentation.</title>
        <authorList>
            <person name="Shinohara T."/>
            <person name="Kubodera S."/>
            <person name="Yanagida F."/>
        </authorList>
    </citation>
    <scope>BIOTECHNOLOGY</scope>
</reference>
<reference key="5">
    <citation type="journal article" date="2001" name="Appl. Microbiol. Biotechnol.">
        <title>Effect of overexpression of Saccharomyces cerevisiae Pad1p on the resistance to phenylacrylic acids and lignocellulose hydrolysates under aerobic and oxygen-limited conditions.</title>
        <authorList>
            <person name="Larsson S."/>
            <person name="Nilvebrant N.O."/>
            <person name="Jonsson L.J."/>
        </authorList>
    </citation>
    <scope>FUNCTION</scope>
</reference>
<reference key="6">
    <citation type="journal article" date="2003" name="J. Agric. Food Chem.">
        <title>Enhancing volatile phenol concentrations in wine by expressing various phenolic acid decarboxylase genes in Saccharomyces cerevisiae.</title>
        <authorList>
            <person name="Smit A."/>
            <person name="Cordero Otero R.R."/>
            <person name="Lambrechts M.G."/>
            <person name="Pretorius I.S."/>
            <person name="Van Rensburg P."/>
        </authorList>
    </citation>
    <scope>LACK OF DECARBOXYLASE ACTIVITY</scope>
    <scope>BIOTECHNOLOGY</scope>
</reference>
<reference key="7">
    <citation type="journal article" date="2003" name="Nature">
        <title>Global analysis of protein localization in budding yeast.</title>
        <authorList>
            <person name="Huh W.-K."/>
            <person name="Falvo J.V."/>
            <person name="Gerke L.C."/>
            <person name="Carroll A.S."/>
            <person name="Howson R.W."/>
            <person name="Weissman J.S."/>
            <person name="O'Shea E.K."/>
        </authorList>
    </citation>
    <scope>SUBCELLULAR LOCATION [LARGE SCALE ANALYSIS]</scope>
</reference>
<reference key="8">
    <citation type="journal article" date="2003" name="Nature">
        <title>Global analysis of protein expression in yeast.</title>
        <authorList>
            <person name="Ghaemmaghami S."/>
            <person name="Huh W.-K."/>
            <person name="Bower K."/>
            <person name="Howson R.W."/>
            <person name="Belle A."/>
            <person name="Dephoure N."/>
            <person name="O'Shea E.K."/>
            <person name="Weissman J.S."/>
        </authorList>
    </citation>
    <scope>LEVEL OF PROTEIN EXPRESSION [LARGE SCALE ANALYSIS]</scope>
</reference>
<reference key="9">
    <citation type="journal article" date="2006" name="PLoS Genet.">
        <title>Assessing systems properties of yeast mitochondria through an interaction map of the organelle.</title>
        <authorList>
            <person name="Perocchi F."/>
            <person name="Jensen L.J."/>
            <person name="Gagneur J."/>
            <person name="Ahting U."/>
            <person name="von Mering C."/>
            <person name="Bork P."/>
            <person name="Prokisch H."/>
            <person name="Steinmetz L.M."/>
        </authorList>
    </citation>
    <scope>SUBCELLULAR LOCATION</scope>
</reference>
<reference key="10">
    <citation type="journal article" date="2007" name="Appl. Environ. Microbiol.">
        <title>Decarboxylation of sorbic acid by spoilage yeasts is associated with the PAD1 gene.</title>
        <authorList>
            <person name="Stratford M."/>
            <person name="Plumridge A."/>
            <person name="Archer D.B."/>
        </authorList>
    </citation>
    <scope>FUNCTION</scope>
</reference>
<reference key="11">
    <citation type="journal article" date="2007" name="Arch. Biochem. Biophys.">
        <title>The role of UbiX in Escherichia coli coenzyme Q biosynthesis.</title>
        <authorList>
            <person name="Gulmezian M."/>
            <person name="Hyman K.R."/>
            <person name="Marbois B.N."/>
            <person name="Clarke C.F."/>
            <person name="Javor G.T."/>
        </authorList>
    </citation>
    <scope>FUNCTION</scope>
</reference>
<reference key="12">
    <citation type="journal article" date="2010" name="J. Biosci. Bioeng.">
        <title>PAD1 and FDC1 are essential for the decarboxylation of phenylacrylic acids in Saccharomyces cerevisiae.</title>
        <authorList>
            <person name="Mukai N."/>
            <person name="Masaki K."/>
            <person name="Fujii T."/>
            <person name="Kawamukai M."/>
            <person name="Iefuji H."/>
        </authorList>
    </citation>
    <scope>FUNCTION</scope>
</reference>
<reference key="13">
    <citation type="journal article" date="2010" name="PLoS ONE">
        <title>Proteome-wide search reveals unexpected RNA-binding proteins in Saccharomyces cerevisiae.</title>
        <authorList>
            <person name="Tsvetanova N.G."/>
            <person name="Klass D.M."/>
            <person name="Salzman J."/>
            <person name="Brown P.O."/>
        </authorList>
    </citation>
    <scope>RNA-BINDING</scope>
</reference>
<reference key="14">
    <citation type="journal article" date="2011" name="Appl. Microbiol. Biotechnol.">
        <title>Identifying genes that impact on aroma profiles produced by Saccharomyces cerevisiae and the production of higher alcohols.</title>
        <authorList>
            <person name="Styger G."/>
            <person name="Jacobson D."/>
            <person name="Bauer F.F."/>
        </authorList>
    </citation>
    <scope>BIOTECHNOLOGY</scope>
</reference>
<reference key="15">
    <citation type="journal article" date="2013" name="Appl. Microbiol. Biotechnol.">
        <title>Genetic analysis of the metabolic pathways responsible for aroma metabolite production by Saccharomyces cerevisiae.</title>
        <authorList>
            <person name="Styger G."/>
            <person name="Jacobson D."/>
            <person name="Prior B.A."/>
            <person name="Bauer F.F."/>
        </authorList>
    </citation>
    <scope>FUNCTION</scope>
</reference>
<reference key="16">
    <citation type="journal article" date="2015" name="ACS Chem. Biol.">
        <title>Isofunctional enzymes PAD1 and UbiX catalyze formation of a novel cofactor required by ferulic acid decarboxylase and 4-hydroxy-3-polyprenylbenzoic acid decarboxylase.</title>
        <authorList>
            <person name="Lin F."/>
            <person name="Ferguson K.L."/>
            <person name="Boyer D.R."/>
            <person name="Lin X.N."/>
            <person name="Marsh E.N."/>
        </authorList>
    </citation>
    <scope>FUNCTION</scope>
    <scope>SUBUNIT</scope>
    <scope>MASS SPECTROMETRY</scope>
    <scope>FMN-BINDING</scope>
</reference>
<reference key="17">
    <citation type="journal article" date="2015" name="AMB Express">
        <title>Overexpression of PAD1 and FDC1 results in significant cinnamic acid decarboxylase activity in Saccharomyces cerevisiae.</title>
        <authorList>
            <person name="Richard P."/>
            <person name="Viljanen K."/>
            <person name="Penttila M."/>
        </authorList>
    </citation>
    <scope>LACK OF DECARBOXYLASE ACTIVITY</scope>
</reference>
<proteinExistence type="evidence at protein level"/>
<dbReference type="EC" id="2.5.1.129" evidence="1 2"/>
<dbReference type="EMBL" id="L09263">
    <property type="protein sequence ID" value="AAA20484.1"/>
    <property type="molecule type" value="Genomic_DNA"/>
</dbReference>
<dbReference type="EMBL" id="U43834">
    <property type="protein sequence ID" value="AAB64980.1"/>
    <property type="molecule type" value="Genomic_DNA"/>
</dbReference>
<dbReference type="EMBL" id="BK006938">
    <property type="protein sequence ID" value="DAA12367.1"/>
    <property type="molecule type" value="Genomic_DNA"/>
</dbReference>
<dbReference type="PIR" id="S62017">
    <property type="entry name" value="S62017"/>
</dbReference>
<dbReference type="RefSeq" id="NP_010827.3">
    <property type="nucleotide sequence ID" value="NM_001180846.3"/>
</dbReference>
<dbReference type="SMR" id="P33751"/>
<dbReference type="BioGRID" id="32585">
    <property type="interactions" value="106"/>
</dbReference>
<dbReference type="DIP" id="DIP-5454N"/>
<dbReference type="FunCoup" id="P33751">
    <property type="interactions" value="276"/>
</dbReference>
<dbReference type="IntAct" id="P33751">
    <property type="interactions" value="2"/>
</dbReference>
<dbReference type="MINT" id="P33751"/>
<dbReference type="STRING" id="4932.YDR538W"/>
<dbReference type="PaxDb" id="4932-YDR538W"/>
<dbReference type="PeptideAtlas" id="P33751"/>
<dbReference type="EnsemblFungi" id="YDR538W_mRNA">
    <property type="protein sequence ID" value="YDR538W"/>
    <property type="gene ID" value="YDR538W"/>
</dbReference>
<dbReference type="GeneID" id="852150"/>
<dbReference type="KEGG" id="sce:YDR538W"/>
<dbReference type="AGR" id="SGD:S000002946"/>
<dbReference type="SGD" id="S000002946">
    <property type="gene designation" value="PAD1"/>
</dbReference>
<dbReference type="VEuPathDB" id="FungiDB:YDR538W"/>
<dbReference type="eggNOG" id="ENOG502QWR5">
    <property type="taxonomic scope" value="Eukaryota"/>
</dbReference>
<dbReference type="GeneTree" id="ENSGT00940000176404"/>
<dbReference type="HOGENOM" id="CLU_074522_3_0_1"/>
<dbReference type="InParanoid" id="P33751"/>
<dbReference type="OMA" id="GATHIQD"/>
<dbReference type="OrthoDB" id="5126881at2759"/>
<dbReference type="BioCyc" id="MetaCyc:YDR538W-MONOMER"/>
<dbReference type="BioCyc" id="YEAST:YDR538W-MONOMER"/>
<dbReference type="BioGRID-ORCS" id="852150">
    <property type="hits" value="1 hit in 10 CRISPR screens"/>
</dbReference>
<dbReference type="PRO" id="PR:P33751"/>
<dbReference type="Proteomes" id="UP000002311">
    <property type="component" value="Chromosome IV"/>
</dbReference>
<dbReference type="RNAct" id="P33751">
    <property type="molecule type" value="protein"/>
</dbReference>
<dbReference type="GO" id="GO:0005739">
    <property type="term" value="C:mitochondrion"/>
    <property type="evidence" value="ECO:0000314"/>
    <property type="project" value="SGD"/>
</dbReference>
<dbReference type="GO" id="GO:0016831">
    <property type="term" value="F:carboxy-lyase activity"/>
    <property type="evidence" value="ECO:0000315"/>
    <property type="project" value="SGD"/>
</dbReference>
<dbReference type="GO" id="GO:0106141">
    <property type="term" value="F:flavin prenyltransferase activity"/>
    <property type="evidence" value="ECO:0007669"/>
    <property type="project" value="UniProtKB-EC"/>
</dbReference>
<dbReference type="GO" id="GO:0003729">
    <property type="term" value="F:mRNA binding"/>
    <property type="evidence" value="ECO:0000314"/>
    <property type="project" value="SGD"/>
</dbReference>
<dbReference type="GO" id="GO:0009056">
    <property type="term" value="P:catabolic process"/>
    <property type="evidence" value="ECO:0000315"/>
    <property type="project" value="SGD"/>
</dbReference>
<dbReference type="GO" id="GO:0034599">
    <property type="term" value="P:cellular response to oxidative stress"/>
    <property type="evidence" value="ECO:0000314"/>
    <property type="project" value="CACAO"/>
</dbReference>
<dbReference type="GO" id="GO:0046281">
    <property type="term" value="P:cinnamic acid catabolic process"/>
    <property type="evidence" value="ECO:0000315"/>
    <property type="project" value="SGD"/>
</dbReference>
<dbReference type="FunFam" id="3.40.50.1950:FF:000001">
    <property type="entry name" value="Flavin prenyltransferase UbiX"/>
    <property type="match status" value="1"/>
</dbReference>
<dbReference type="Gene3D" id="3.40.50.1950">
    <property type="entry name" value="Flavin prenyltransferase-like"/>
    <property type="match status" value="1"/>
</dbReference>
<dbReference type="HAMAP" id="MF_01984">
    <property type="entry name" value="ubiX_pad"/>
    <property type="match status" value="1"/>
</dbReference>
<dbReference type="InterPro" id="IPR036551">
    <property type="entry name" value="Flavin_trans-like"/>
</dbReference>
<dbReference type="InterPro" id="IPR003382">
    <property type="entry name" value="Flavoprotein"/>
</dbReference>
<dbReference type="InterPro" id="IPR004507">
    <property type="entry name" value="UbiX-like"/>
</dbReference>
<dbReference type="NCBIfam" id="NF004685">
    <property type="entry name" value="PRK06029.1"/>
    <property type="match status" value="1"/>
</dbReference>
<dbReference type="NCBIfam" id="TIGR00421">
    <property type="entry name" value="ubiX_pad"/>
    <property type="match status" value="1"/>
</dbReference>
<dbReference type="PANTHER" id="PTHR43374">
    <property type="entry name" value="FLAVIN PRENYLTRANSFERASE"/>
    <property type="match status" value="1"/>
</dbReference>
<dbReference type="PANTHER" id="PTHR43374:SF1">
    <property type="entry name" value="FLAVIN PRENYLTRANSFERASE PAD1, MITOCHONDRIAL"/>
    <property type="match status" value="1"/>
</dbReference>
<dbReference type="Pfam" id="PF02441">
    <property type="entry name" value="Flavoprotein"/>
    <property type="match status" value="1"/>
</dbReference>
<dbReference type="SUPFAM" id="SSF52507">
    <property type="entry name" value="Homo-oligomeric flavin-containing Cys decarboxylases, HFCD"/>
    <property type="match status" value="1"/>
</dbReference>
<feature type="transit peptide" description="Mitochondrion" evidence="2">
    <location>
        <begin position="1"/>
        <end position="58"/>
    </location>
</feature>
<feature type="chain" id="PRO_0000134984" description="Flavin prenyltransferase PAD1, mitochondrial" evidence="2">
    <location>
        <begin position="59"/>
        <end position="242"/>
    </location>
</feature>
<feature type="binding site" evidence="2">
    <location>
        <begin position="63"/>
        <end position="65"/>
    </location>
    <ligand>
        <name>FMN</name>
        <dbReference type="ChEBI" id="CHEBI:58210"/>
    </ligand>
</feature>
<feature type="binding site" evidence="2">
    <location>
        <position position="89"/>
    </location>
    <ligand>
        <name>FMN</name>
        <dbReference type="ChEBI" id="CHEBI:58210"/>
    </ligand>
</feature>
<feature type="binding site" evidence="2">
    <location>
        <begin position="140"/>
        <end position="143"/>
    </location>
    <ligand>
        <name>FMN</name>
        <dbReference type="ChEBI" id="CHEBI:58210"/>
    </ligand>
</feature>
<feature type="binding site" evidence="2">
    <location>
        <position position="175"/>
    </location>
    <ligand>
        <name>FMN</name>
        <dbReference type="ChEBI" id="CHEBI:58210"/>
    </ligand>
</feature>
<feature type="binding site" evidence="2">
    <location>
        <position position="205"/>
    </location>
    <ligand>
        <name>dimethylallyl phosphate</name>
        <dbReference type="ChEBI" id="CHEBI:88052"/>
    </ligand>
</feature>
<feature type="binding site" evidence="2">
    <location>
        <position position="221"/>
    </location>
    <ligand>
        <name>dimethylallyl phosphate</name>
        <dbReference type="ChEBI" id="CHEBI:88052"/>
    </ligand>
</feature>
<feature type="sequence conflict" description="In Ref. 1; AAA20484." evidence="20" ref="1">
    <original>V</original>
    <variation>L</variation>
    <location>
        <position position="76"/>
    </location>
</feature>
<sequence>MLLFPRRTNIAFFKTTGIFANFPLLGRTITTSPSFLTHKLSKEVTRASTSPPRPKRIVVAITGATGVALGIRLLQVLKELSVETHLVISKWGAATMKYETDWEPHDVAALATKTYSVRDVSACISSGSFQHDGMIVVPCSMKSLAAIRIGFTEDLITRAADVSIKENRKLLLVTRETPLSSIHLENMLSLCRAGVIIFPPVPAFYTRPKSLHDLLEQSVGRILDCFGIHADTFPRWEGIKSK</sequence>
<protein>
    <recommendedName>
        <fullName evidence="2 20">Flavin prenyltransferase PAD1, mitochondrial</fullName>
        <ecNumber evidence="1 2">2.5.1.129</ecNumber>
    </recommendedName>
    <alternativeName>
        <fullName evidence="19">Phenylacrylic acid decarboxylase 1</fullName>
        <shortName evidence="19">PAD</shortName>
    </alternativeName>
</protein>
<organism>
    <name type="scientific">Saccharomyces cerevisiae (strain ATCC 204508 / S288c)</name>
    <name type="common">Baker's yeast</name>
    <dbReference type="NCBI Taxonomy" id="559292"/>
    <lineage>
        <taxon>Eukaryota</taxon>
        <taxon>Fungi</taxon>
        <taxon>Dikarya</taxon>
        <taxon>Ascomycota</taxon>
        <taxon>Saccharomycotina</taxon>
        <taxon>Saccharomycetes</taxon>
        <taxon>Saccharomycetales</taxon>
        <taxon>Saccharomycetaceae</taxon>
        <taxon>Saccharomyces</taxon>
    </lineage>
</organism>